<evidence type="ECO:0000255" key="1">
    <source>
        <dbReference type="HAMAP-Rule" id="MF_01853"/>
    </source>
</evidence>
<gene>
    <name evidence="1" type="primary">pelA</name>
    <name type="ordered locus">Hlac_2030</name>
</gene>
<feature type="chain" id="PRO_1000188678" description="Protein pelota homolog">
    <location>
        <begin position="1"/>
        <end position="355"/>
    </location>
</feature>
<proteinExistence type="inferred from homology"/>
<dbReference type="EC" id="3.1.-.-" evidence="1"/>
<dbReference type="EMBL" id="CP001365">
    <property type="protein sequence ID" value="ACM57608.1"/>
    <property type="molecule type" value="Genomic_DNA"/>
</dbReference>
<dbReference type="RefSeq" id="WP_015910733.1">
    <property type="nucleotide sequence ID" value="NC_012029.1"/>
</dbReference>
<dbReference type="SMR" id="B9LQI7"/>
<dbReference type="GeneID" id="7402049"/>
<dbReference type="KEGG" id="hla:Hlac_2030"/>
<dbReference type="eggNOG" id="arCOG01741">
    <property type="taxonomic scope" value="Archaea"/>
</dbReference>
<dbReference type="HOGENOM" id="CLU_023334_0_0_2"/>
<dbReference type="Proteomes" id="UP000000740">
    <property type="component" value="Chromosome 1"/>
</dbReference>
<dbReference type="GO" id="GO:0005737">
    <property type="term" value="C:cytoplasm"/>
    <property type="evidence" value="ECO:0007669"/>
    <property type="project" value="UniProtKB-SubCell"/>
</dbReference>
<dbReference type="GO" id="GO:0004519">
    <property type="term" value="F:endonuclease activity"/>
    <property type="evidence" value="ECO:0007669"/>
    <property type="project" value="UniProtKB-UniRule"/>
</dbReference>
<dbReference type="GO" id="GO:0046872">
    <property type="term" value="F:metal ion binding"/>
    <property type="evidence" value="ECO:0007669"/>
    <property type="project" value="UniProtKB-UniRule"/>
</dbReference>
<dbReference type="GO" id="GO:0070651">
    <property type="term" value="P:nonfunctional rRNA decay"/>
    <property type="evidence" value="ECO:0007669"/>
    <property type="project" value="TreeGrafter"/>
</dbReference>
<dbReference type="GO" id="GO:0070966">
    <property type="term" value="P:nuclear-transcribed mRNA catabolic process, no-go decay"/>
    <property type="evidence" value="ECO:0007669"/>
    <property type="project" value="InterPro"/>
</dbReference>
<dbReference type="GO" id="GO:0070481">
    <property type="term" value="P:nuclear-transcribed mRNA catabolic process, non-stop decay"/>
    <property type="evidence" value="ECO:0007669"/>
    <property type="project" value="InterPro"/>
</dbReference>
<dbReference type="GO" id="GO:0032790">
    <property type="term" value="P:ribosome disassembly"/>
    <property type="evidence" value="ECO:0007669"/>
    <property type="project" value="TreeGrafter"/>
</dbReference>
<dbReference type="GO" id="GO:0071025">
    <property type="term" value="P:RNA surveillance"/>
    <property type="evidence" value="ECO:0007669"/>
    <property type="project" value="InterPro"/>
</dbReference>
<dbReference type="FunFam" id="2.30.30.870:FF:000002">
    <property type="entry name" value="Protein pelota homolog"/>
    <property type="match status" value="1"/>
</dbReference>
<dbReference type="Gene3D" id="3.30.1330.30">
    <property type="match status" value="1"/>
</dbReference>
<dbReference type="Gene3D" id="3.30.420.60">
    <property type="entry name" value="eRF1 domain 2"/>
    <property type="match status" value="1"/>
</dbReference>
<dbReference type="Gene3D" id="2.30.30.870">
    <property type="entry name" value="Pelota, domain A"/>
    <property type="match status" value="1"/>
</dbReference>
<dbReference type="HAMAP" id="MF_01853">
    <property type="entry name" value="PelO"/>
    <property type="match status" value="1"/>
</dbReference>
<dbReference type="InterPro" id="IPR042226">
    <property type="entry name" value="eFR1_2_sf"/>
</dbReference>
<dbReference type="InterPro" id="IPR005140">
    <property type="entry name" value="eRF1_1_Pelota"/>
</dbReference>
<dbReference type="InterPro" id="IPR005141">
    <property type="entry name" value="eRF1_2"/>
</dbReference>
<dbReference type="InterPro" id="IPR005142">
    <property type="entry name" value="eRF1_3"/>
</dbReference>
<dbReference type="InterPro" id="IPR038069">
    <property type="entry name" value="Pelota/DOM34_N"/>
</dbReference>
<dbReference type="InterPro" id="IPR023521">
    <property type="entry name" value="Pelota_arc"/>
</dbReference>
<dbReference type="InterPro" id="IPR029064">
    <property type="entry name" value="Ribosomal_eL30-like_sf"/>
</dbReference>
<dbReference type="InterPro" id="IPR004405">
    <property type="entry name" value="Transl-rel_pelota"/>
</dbReference>
<dbReference type="NCBIfam" id="TIGR00111">
    <property type="entry name" value="pelota"/>
    <property type="match status" value="1"/>
</dbReference>
<dbReference type="PANTHER" id="PTHR10853">
    <property type="entry name" value="PELOTA"/>
    <property type="match status" value="1"/>
</dbReference>
<dbReference type="PANTHER" id="PTHR10853:SF0">
    <property type="entry name" value="PROTEIN PELOTA HOMOLOG"/>
    <property type="match status" value="1"/>
</dbReference>
<dbReference type="Pfam" id="PF03463">
    <property type="entry name" value="eRF1_1"/>
    <property type="match status" value="1"/>
</dbReference>
<dbReference type="Pfam" id="PF03464">
    <property type="entry name" value="eRF1_2"/>
    <property type="match status" value="1"/>
</dbReference>
<dbReference type="Pfam" id="PF03465">
    <property type="entry name" value="eRF1_3"/>
    <property type="match status" value="1"/>
</dbReference>
<dbReference type="SMART" id="SM01194">
    <property type="entry name" value="eRF1_1"/>
    <property type="match status" value="1"/>
</dbReference>
<dbReference type="SUPFAM" id="SSF159065">
    <property type="entry name" value="Dom34/Pelota N-terminal domain-like"/>
    <property type="match status" value="1"/>
</dbReference>
<dbReference type="SUPFAM" id="SSF55315">
    <property type="entry name" value="L30e-like"/>
    <property type="match status" value="1"/>
</dbReference>
<dbReference type="SUPFAM" id="SSF53137">
    <property type="entry name" value="Translational machinery components"/>
    <property type="match status" value="1"/>
</dbReference>
<keyword id="KW-0963">Cytoplasm</keyword>
<keyword id="KW-0255">Endonuclease</keyword>
<keyword id="KW-0378">Hydrolase</keyword>
<keyword id="KW-0479">Metal-binding</keyword>
<keyword id="KW-0540">Nuclease</keyword>
<keyword id="KW-1185">Reference proteome</keyword>
<sequence>MRISDRGYGEEGRERLTLVPENVDDLWHLAHVLEPGDLVEGDTTRRIQRNDDQMRDTGGQREHLFVTLQVDEVEFARFANRLRVSGVIVGCSREDQLNAHHTINVEEHDEITVEKHFKPDQTERLEEATEAAENPDVAIATVEEGAAYVHTVQQYGTEEYASFTKPTGKGDYSRPREELFAELGEALAHLDADAVILAGPGFTKQDALDYITEEYRDLADRITTVDTSAAGDRGVHEVLKRGAVDEVQKETRISKEATLIDDLTAEIAQGAKATYGPEDVAEAAEFGAIETLLVVDDRLRTERQGEGDWSIDVNEVIESVEQQGGDVVVFSSEFAPGEQLSNLGGIAAILRYRLQ</sequence>
<reference key="1">
    <citation type="journal article" date="2016" name="Stand. Genomic Sci.">
        <title>Complete genome sequence of the Antarctic Halorubrum lacusprofundi type strain ACAM 34.</title>
        <authorList>
            <person name="Anderson I.J."/>
            <person name="DasSarma P."/>
            <person name="Lucas S."/>
            <person name="Copeland A."/>
            <person name="Lapidus A."/>
            <person name="Del Rio T.G."/>
            <person name="Tice H."/>
            <person name="Dalin E."/>
            <person name="Bruce D.C."/>
            <person name="Goodwin L."/>
            <person name="Pitluck S."/>
            <person name="Sims D."/>
            <person name="Brettin T.S."/>
            <person name="Detter J.C."/>
            <person name="Han C.S."/>
            <person name="Larimer F."/>
            <person name="Hauser L."/>
            <person name="Land M."/>
            <person name="Ivanova N."/>
            <person name="Richardson P."/>
            <person name="Cavicchioli R."/>
            <person name="DasSarma S."/>
            <person name="Woese C.R."/>
            <person name="Kyrpides N.C."/>
        </authorList>
    </citation>
    <scope>NUCLEOTIDE SEQUENCE [LARGE SCALE GENOMIC DNA]</scope>
    <source>
        <strain>ATCC 49239 / DSM 5036 / JCM 8891 / ACAM 34</strain>
    </source>
</reference>
<name>PELO_HALLT</name>
<protein>
    <recommendedName>
        <fullName evidence="1">Protein pelota homolog</fullName>
        <ecNumber evidence="1">3.1.-.-</ecNumber>
    </recommendedName>
</protein>
<comment type="function">
    <text evidence="1">May function in recognizing stalled ribosomes, interact with stem-loop structures in stalled mRNA molecules, and effect endonucleolytic cleavage of the mRNA. May play a role in the release non-functional ribosomes and degradation of damaged mRNAs. Has endoribonuclease activity.</text>
</comment>
<comment type="cofactor">
    <cofactor evidence="1">
        <name>a divalent metal cation</name>
        <dbReference type="ChEBI" id="CHEBI:60240"/>
    </cofactor>
</comment>
<comment type="subunit">
    <text evidence="1">Monomer.</text>
</comment>
<comment type="subcellular location">
    <subcellularLocation>
        <location evidence="1">Cytoplasm</location>
    </subcellularLocation>
</comment>
<comment type="domain">
    <text evidence="1">The N-terminal domain has the RNA-binding Sm fold. It harbors the endoribonuclease activity.</text>
</comment>
<comment type="similarity">
    <text evidence="1">Belongs to the eukaryotic release factor 1 family. Pelota subfamily.</text>
</comment>
<accession>B9LQI7</accession>
<organism>
    <name type="scientific">Halorubrum lacusprofundi (strain ATCC 49239 / DSM 5036 / JCM 8891 / ACAM 34)</name>
    <dbReference type="NCBI Taxonomy" id="416348"/>
    <lineage>
        <taxon>Archaea</taxon>
        <taxon>Methanobacteriati</taxon>
        <taxon>Methanobacteriota</taxon>
        <taxon>Stenosarchaea group</taxon>
        <taxon>Halobacteria</taxon>
        <taxon>Halobacteriales</taxon>
        <taxon>Haloferacaceae</taxon>
        <taxon>Halorubrum</taxon>
    </lineage>
</organism>